<reference key="1">
    <citation type="journal article" date="2008" name="Environ. Microbiol.">
        <title>The genome of Erwinia tasmaniensis strain Et1/99, a non-pathogenic bacterium in the genus Erwinia.</title>
        <authorList>
            <person name="Kube M."/>
            <person name="Migdoll A.M."/>
            <person name="Mueller I."/>
            <person name="Kuhl H."/>
            <person name="Beck A."/>
            <person name="Reinhardt R."/>
            <person name="Geider K."/>
        </authorList>
    </citation>
    <scope>NUCLEOTIDE SEQUENCE [LARGE SCALE GENOMIC DNA]</scope>
    <source>
        <strain>DSM 17950 / CFBP 7177 / CIP 109463 / NCPPB 4357 / Et1/99</strain>
    </source>
</reference>
<gene>
    <name evidence="1" type="primary">fadI</name>
    <name type="ordered locus">ETA_11490</name>
</gene>
<keyword id="KW-0012">Acyltransferase</keyword>
<keyword id="KW-0963">Cytoplasm</keyword>
<keyword id="KW-0276">Fatty acid metabolism</keyword>
<keyword id="KW-0442">Lipid degradation</keyword>
<keyword id="KW-0443">Lipid metabolism</keyword>
<keyword id="KW-1185">Reference proteome</keyword>
<keyword id="KW-0808">Transferase</keyword>
<protein>
    <recommendedName>
        <fullName evidence="1">3-ketoacyl-CoA thiolase</fullName>
        <ecNumber evidence="1">2.3.1.16</ecNumber>
    </recommendedName>
    <alternativeName>
        <fullName evidence="1">ACSs</fullName>
    </alternativeName>
    <alternativeName>
        <fullName evidence="1">Acetyl-CoA acyltransferase</fullName>
    </alternativeName>
    <alternativeName>
        <fullName evidence="1">Acyl-CoA ligase</fullName>
    </alternativeName>
    <alternativeName>
        <fullName evidence="1">Beta-ketothiolase</fullName>
    </alternativeName>
    <alternativeName>
        <fullName evidence="1">Fatty acid oxidation complex subunit beta</fullName>
    </alternativeName>
</protein>
<organism>
    <name type="scientific">Erwinia tasmaniensis (strain DSM 17950 / CFBP 7177 / CIP 109463 / NCPPB 4357 / Et1/99)</name>
    <dbReference type="NCBI Taxonomy" id="465817"/>
    <lineage>
        <taxon>Bacteria</taxon>
        <taxon>Pseudomonadati</taxon>
        <taxon>Pseudomonadota</taxon>
        <taxon>Gammaproteobacteria</taxon>
        <taxon>Enterobacterales</taxon>
        <taxon>Erwiniaceae</taxon>
        <taxon>Erwinia</taxon>
    </lineage>
</organism>
<feature type="chain" id="PRO_1000185968" description="3-ketoacyl-CoA thiolase">
    <location>
        <begin position="1"/>
        <end position="437"/>
    </location>
</feature>
<feature type="active site" description="Acyl-thioester intermediate" evidence="1">
    <location>
        <position position="99"/>
    </location>
</feature>
<feature type="active site" description="Proton acceptor" evidence="1">
    <location>
        <position position="392"/>
    </location>
</feature>
<feature type="active site" description="Proton acceptor" evidence="1">
    <location>
        <position position="422"/>
    </location>
</feature>
<name>FADI_ERWT9</name>
<proteinExistence type="inferred from homology"/>
<dbReference type="EC" id="2.3.1.16" evidence="1"/>
<dbReference type="EMBL" id="CU468135">
    <property type="protein sequence ID" value="CAO96195.1"/>
    <property type="molecule type" value="Genomic_DNA"/>
</dbReference>
<dbReference type="RefSeq" id="WP_012440892.1">
    <property type="nucleotide sequence ID" value="NC_010694.1"/>
</dbReference>
<dbReference type="SMR" id="B2VJ10"/>
<dbReference type="STRING" id="465817.ETA_11490"/>
<dbReference type="KEGG" id="eta:ETA_11490"/>
<dbReference type="eggNOG" id="COG0183">
    <property type="taxonomic scope" value="Bacteria"/>
</dbReference>
<dbReference type="HOGENOM" id="CLU_031026_2_0_6"/>
<dbReference type="OrthoDB" id="8951704at2"/>
<dbReference type="UniPathway" id="UPA00659"/>
<dbReference type="Proteomes" id="UP000001726">
    <property type="component" value="Chromosome"/>
</dbReference>
<dbReference type="GO" id="GO:0005829">
    <property type="term" value="C:cytosol"/>
    <property type="evidence" value="ECO:0007669"/>
    <property type="project" value="TreeGrafter"/>
</dbReference>
<dbReference type="GO" id="GO:0003988">
    <property type="term" value="F:acetyl-CoA C-acyltransferase activity"/>
    <property type="evidence" value="ECO:0007669"/>
    <property type="project" value="UniProtKB-UniRule"/>
</dbReference>
<dbReference type="GO" id="GO:0006635">
    <property type="term" value="P:fatty acid beta-oxidation"/>
    <property type="evidence" value="ECO:0007669"/>
    <property type="project" value="UniProtKB-UniRule"/>
</dbReference>
<dbReference type="CDD" id="cd00751">
    <property type="entry name" value="thiolase"/>
    <property type="match status" value="1"/>
</dbReference>
<dbReference type="FunFam" id="3.40.47.10:FF:000011">
    <property type="entry name" value="3-ketoacyl-CoA thiolase"/>
    <property type="match status" value="1"/>
</dbReference>
<dbReference type="Gene3D" id="3.40.47.10">
    <property type="match status" value="1"/>
</dbReference>
<dbReference type="HAMAP" id="MF_01618">
    <property type="entry name" value="FadI"/>
    <property type="match status" value="1"/>
</dbReference>
<dbReference type="InterPro" id="IPR012806">
    <property type="entry name" value="Ac-CoA_C-AcTrfase_FadI"/>
</dbReference>
<dbReference type="InterPro" id="IPR002155">
    <property type="entry name" value="Thiolase"/>
</dbReference>
<dbReference type="InterPro" id="IPR016039">
    <property type="entry name" value="Thiolase-like"/>
</dbReference>
<dbReference type="InterPro" id="IPR020615">
    <property type="entry name" value="Thiolase_acyl_enz_int_AS"/>
</dbReference>
<dbReference type="InterPro" id="IPR020610">
    <property type="entry name" value="Thiolase_AS"/>
</dbReference>
<dbReference type="InterPro" id="IPR020617">
    <property type="entry name" value="Thiolase_C"/>
</dbReference>
<dbReference type="InterPro" id="IPR020613">
    <property type="entry name" value="Thiolase_CS"/>
</dbReference>
<dbReference type="InterPro" id="IPR020616">
    <property type="entry name" value="Thiolase_N"/>
</dbReference>
<dbReference type="NCBIfam" id="TIGR01930">
    <property type="entry name" value="AcCoA-C-Actrans"/>
    <property type="match status" value="1"/>
</dbReference>
<dbReference type="NCBIfam" id="TIGR02446">
    <property type="entry name" value="FadI"/>
    <property type="match status" value="1"/>
</dbReference>
<dbReference type="NCBIfam" id="NF006516">
    <property type="entry name" value="PRK08963.1"/>
    <property type="match status" value="1"/>
</dbReference>
<dbReference type="PANTHER" id="PTHR18919:SF107">
    <property type="entry name" value="ACETYL-COA ACETYLTRANSFERASE, CYTOSOLIC"/>
    <property type="match status" value="1"/>
</dbReference>
<dbReference type="PANTHER" id="PTHR18919">
    <property type="entry name" value="ACETYL-COA C-ACYLTRANSFERASE"/>
    <property type="match status" value="1"/>
</dbReference>
<dbReference type="Pfam" id="PF02803">
    <property type="entry name" value="Thiolase_C"/>
    <property type="match status" value="1"/>
</dbReference>
<dbReference type="Pfam" id="PF00108">
    <property type="entry name" value="Thiolase_N"/>
    <property type="match status" value="1"/>
</dbReference>
<dbReference type="PIRSF" id="PIRSF000429">
    <property type="entry name" value="Ac-CoA_Ac_transf"/>
    <property type="match status" value="1"/>
</dbReference>
<dbReference type="SUPFAM" id="SSF53901">
    <property type="entry name" value="Thiolase-like"/>
    <property type="match status" value="2"/>
</dbReference>
<dbReference type="PROSITE" id="PS00098">
    <property type="entry name" value="THIOLASE_1"/>
    <property type="match status" value="1"/>
</dbReference>
<dbReference type="PROSITE" id="PS00737">
    <property type="entry name" value="THIOLASE_2"/>
    <property type="match status" value="1"/>
</dbReference>
<dbReference type="PROSITE" id="PS00099">
    <property type="entry name" value="THIOLASE_3"/>
    <property type="match status" value="1"/>
</dbReference>
<evidence type="ECO:0000255" key="1">
    <source>
        <dbReference type="HAMAP-Rule" id="MF_01618"/>
    </source>
</evidence>
<accession>B2VJ10</accession>
<comment type="function">
    <text evidence="1">Catalyzes the final step of fatty acid oxidation in which acetyl-CoA is released and the CoA ester of a fatty acid two carbons shorter is formed.</text>
</comment>
<comment type="catalytic activity">
    <reaction evidence="1">
        <text>an acyl-CoA + acetyl-CoA = a 3-oxoacyl-CoA + CoA</text>
        <dbReference type="Rhea" id="RHEA:21564"/>
        <dbReference type="ChEBI" id="CHEBI:57287"/>
        <dbReference type="ChEBI" id="CHEBI:57288"/>
        <dbReference type="ChEBI" id="CHEBI:58342"/>
        <dbReference type="ChEBI" id="CHEBI:90726"/>
        <dbReference type="EC" id="2.3.1.16"/>
    </reaction>
</comment>
<comment type="pathway">
    <text evidence="1">Lipid metabolism; fatty acid beta-oxidation.</text>
</comment>
<comment type="subunit">
    <text evidence="1">Heterotetramer of two alpha chains (FadJ) and two beta chains (FadI).</text>
</comment>
<comment type="subcellular location">
    <subcellularLocation>
        <location evidence="1">Cytoplasm</location>
    </subcellularLocation>
</comment>
<comment type="similarity">
    <text evidence="1">Belongs to the thiolase-like superfamily. Thiolase family.</text>
</comment>
<sequence>MSKALPLLTRQGERIAITHGLRTPFARQATAFHGIPALELGRMVVSELLARSEISPDVIEQLVFGQVVQMPEAPNIAREIVLASALSVHTDAWSVSRACATSFQAVANVAESLMIGHIQAGIAGGADSSSVLPIGVSKKLARLLVDASKTRSLAQKLKLFSGLRPRDLLPVAPAVAEYSTGLRMGDSAEQMAKNHGITREQQDALALRSHQRAAHAWQQGLLNDEVMTACVPPWEQPFEQDNNVRAESKMQDYARLRPAFDRRHGTVTAANSTPLTDGAAAVILMTASRARELGIAPLGFLRSYAFSAIDVRQDMLLGPSYASPLALDRAGITLADLSLIDMHEAFAAQTLANLKMFADERFAREVLDRPRALGEVDMERFNVLGGSIAYGHPFAATGARMITQTLNELRRRGGGLGLVTACAAGGLGAAMVLEVDS</sequence>